<comment type="subcellular location">
    <subcellularLocation>
        <location evidence="1">Secreted</location>
    </subcellularLocation>
</comment>
<comment type="tissue specificity">
    <text>Expressed by the venom gland.</text>
</comment>
<comment type="PTM">
    <text evidence="3">Contains 3 disulfide bonds.</text>
</comment>
<comment type="similarity">
    <text>Belongs to the neurotoxin 25 family. F7 subfamily.</text>
</comment>
<protein>
    <recommendedName>
        <fullName>U3-theraphotoxin-Lsp1a</fullName>
        <shortName>U3-TRTX-Lsp1a</shortName>
    </recommendedName>
    <alternativeName>
        <fullName>LTx5</fullName>
    </alternativeName>
</protein>
<sequence>MKLSTFIIMISLAVALATWPSEHIEGSDSETKLNVELGPYALADRAEKGKDDSLNKGEPCQFHCECRGASVLCEAVYGTRSPMYKCMIKRLPISVLDIMYQAERALEKLASSFRCE</sequence>
<reference key="1">
    <citation type="submission" date="2007-01" db="EMBL/GenBank/DDBJ databases">
        <title>Screening of a Lasiodora sp. expression library and molecular cloning of Lasiodora sp. toxins in expression vectors.</title>
        <authorList>
            <person name="Castro I.M."/>
            <person name="Vieira A.L.G."/>
            <person name="Kalapothakis E."/>
        </authorList>
    </citation>
    <scope>NUCLEOTIDE SEQUENCE [MRNA]</scope>
    <source>
        <tissue>Venom gland</tissue>
    </source>
</reference>
<evidence type="ECO:0000250" key="1"/>
<evidence type="ECO:0000255" key="2"/>
<evidence type="ECO:0000305" key="3"/>
<keyword id="KW-1015">Disulfide bond</keyword>
<keyword id="KW-0964">Secreted</keyword>
<keyword id="KW-0732">Signal</keyword>
<keyword id="KW-0800">Toxin</keyword>
<organism>
    <name type="scientific">Lasiodora sp. (strain IBSP 8539)</name>
    <name type="common">Brazilian salmon pink birdeater</name>
    <name type="synonym">Brazilian salmon pink tarantula</name>
    <dbReference type="NCBI Taxonomy" id="300858"/>
    <lineage>
        <taxon>Eukaryota</taxon>
        <taxon>Metazoa</taxon>
        <taxon>Ecdysozoa</taxon>
        <taxon>Arthropoda</taxon>
        <taxon>Chelicerata</taxon>
        <taxon>Arachnida</taxon>
        <taxon>Araneae</taxon>
        <taxon>Mygalomorphae</taxon>
        <taxon>Theraphosidae</taxon>
        <taxon>Lasiodora</taxon>
    </lineage>
</organism>
<dbReference type="EMBL" id="EF219062">
    <property type="protein sequence ID" value="ABN13624.1"/>
    <property type="molecule type" value="mRNA"/>
</dbReference>
<dbReference type="ArachnoServer" id="AS000719">
    <property type="toxin name" value="U3-theraphotoxin-Lsp1a"/>
</dbReference>
<dbReference type="GO" id="GO:0005576">
    <property type="term" value="C:extracellular region"/>
    <property type="evidence" value="ECO:0007669"/>
    <property type="project" value="UniProtKB-SubCell"/>
</dbReference>
<dbReference type="GO" id="GO:0090729">
    <property type="term" value="F:toxin activity"/>
    <property type="evidence" value="ECO:0007669"/>
    <property type="project" value="UniProtKB-KW"/>
</dbReference>
<accession>A3F7X2</accession>
<proteinExistence type="evidence at transcript level"/>
<name>TXTR3_LASSB</name>
<feature type="signal peptide" evidence="2">
    <location>
        <begin position="1"/>
        <end position="17"/>
    </location>
</feature>
<feature type="propeptide" id="PRO_0000388747" evidence="2">
    <location>
        <begin position="18"/>
        <end position="50"/>
    </location>
</feature>
<feature type="chain" id="PRO_0000388748" description="U3-theraphotoxin-Lsp1a" evidence="2">
    <location>
        <begin position="51"/>
        <end position="116"/>
    </location>
</feature>